<proteinExistence type="inferred from homology"/>
<name>Y143_CORK4</name>
<feature type="chain" id="PRO_1000204765" description="Nucleoid-associated protein ckrop_0143">
    <location>
        <begin position="1"/>
        <end position="100"/>
    </location>
</feature>
<evidence type="ECO:0000255" key="1">
    <source>
        <dbReference type="HAMAP-Rule" id="MF_00274"/>
    </source>
</evidence>
<reference key="1">
    <citation type="journal article" date="2008" name="J. Biotechnol.">
        <title>Ultrafast pyrosequencing of Corynebacterium kroppenstedtii DSM44385 revealed insights into the physiology of a lipophilic corynebacterium that lacks mycolic acids.</title>
        <authorList>
            <person name="Tauch A."/>
            <person name="Schneider J."/>
            <person name="Szczepanowski R."/>
            <person name="Tilker A."/>
            <person name="Viehoever P."/>
            <person name="Gartemann K.-H."/>
            <person name="Arnold W."/>
            <person name="Blom J."/>
            <person name="Brinkrolf K."/>
            <person name="Brune I."/>
            <person name="Goetker S."/>
            <person name="Weisshaar B."/>
            <person name="Goesmann A."/>
            <person name="Droege M."/>
            <person name="Puehler A."/>
        </authorList>
    </citation>
    <scope>NUCLEOTIDE SEQUENCE [LARGE SCALE GENOMIC DNA]</scope>
    <source>
        <strain>DSM 44385 / JCM 11950 / CIP 105744 / CCUG 35717</strain>
    </source>
</reference>
<accession>C4LG87</accession>
<organism>
    <name type="scientific">Corynebacterium kroppenstedtii (strain DSM 44385 / JCM 11950 / CIP 105744 / CCUG 35717)</name>
    <dbReference type="NCBI Taxonomy" id="645127"/>
    <lineage>
        <taxon>Bacteria</taxon>
        <taxon>Bacillati</taxon>
        <taxon>Actinomycetota</taxon>
        <taxon>Actinomycetes</taxon>
        <taxon>Mycobacteriales</taxon>
        <taxon>Corynebacteriaceae</taxon>
        <taxon>Corynebacterium</taxon>
    </lineage>
</organism>
<comment type="function">
    <text evidence="1">Binds to DNA and alters its conformation. May be involved in regulation of gene expression, nucleoid organization and DNA protection.</text>
</comment>
<comment type="subunit">
    <text evidence="1">Homodimer.</text>
</comment>
<comment type="subcellular location">
    <subcellularLocation>
        <location evidence="1">Cytoplasm</location>
        <location evidence="1">Nucleoid</location>
    </subcellularLocation>
</comment>
<comment type="similarity">
    <text evidence="1">Belongs to the YbaB/EbfC family.</text>
</comment>
<sequence length="100" mass="10643">MAEPDFNEIMAQAQQMQEELQRVQGEIAQSEISGSAGNGLVKVTMKGTGEVTNVTIDKSVVDPDDVDTLQDLVLGALQDANTALQSYAQEKMGPFSQALG</sequence>
<dbReference type="EMBL" id="CP001620">
    <property type="protein sequence ID" value="ACR16937.1"/>
    <property type="molecule type" value="Genomic_DNA"/>
</dbReference>
<dbReference type="RefSeq" id="WP_012730825.1">
    <property type="nucleotide sequence ID" value="NC_012704.1"/>
</dbReference>
<dbReference type="SMR" id="C4LG87"/>
<dbReference type="STRING" id="645127.ckrop_0143"/>
<dbReference type="KEGG" id="ckp:ckrop_0143"/>
<dbReference type="eggNOG" id="COG0718">
    <property type="taxonomic scope" value="Bacteria"/>
</dbReference>
<dbReference type="HOGENOM" id="CLU_140930_1_0_11"/>
<dbReference type="OrthoDB" id="9809370at2"/>
<dbReference type="Proteomes" id="UP000001473">
    <property type="component" value="Chromosome"/>
</dbReference>
<dbReference type="GO" id="GO:0043590">
    <property type="term" value="C:bacterial nucleoid"/>
    <property type="evidence" value="ECO:0007669"/>
    <property type="project" value="UniProtKB-UniRule"/>
</dbReference>
<dbReference type="GO" id="GO:0005829">
    <property type="term" value="C:cytosol"/>
    <property type="evidence" value="ECO:0007669"/>
    <property type="project" value="TreeGrafter"/>
</dbReference>
<dbReference type="GO" id="GO:0003677">
    <property type="term" value="F:DNA binding"/>
    <property type="evidence" value="ECO:0007669"/>
    <property type="project" value="UniProtKB-UniRule"/>
</dbReference>
<dbReference type="Gene3D" id="3.30.1310.10">
    <property type="entry name" value="Nucleoid-associated protein YbaB-like domain"/>
    <property type="match status" value="1"/>
</dbReference>
<dbReference type="HAMAP" id="MF_00274">
    <property type="entry name" value="DNA_YbaB_EbfC"/>
    <property type="match status" value="1"/>
</dbReference>
<dbReference type="InterPro" id="IPR036894">
    <property type="entry name" value="YbaB-like_sf"/>
</dbReference>
<dbReference type="InterPro" id="IPR004401">
    <property type="entry name" value="YbaB/EbfC"/>
</dbReference>
<dbReference type="NCBIfam" id="TIGR00103">
    <property type="entry name" value="DNA_YbaB_EbfC"/>
    <property type="match status" value="1"/>
</dbReference>
<dbReference type="PANTHER" id="PTHR33449">
    <property type="entry name" value="NUCLEOID-ASSOCIATED PROTEIN YBAB"/>
    <property type="match status" value="1"/>
</dbReference>
<dbReference type="PANTHER" id="PTHR33449:SF1">
    <property type="entry name" value="NUCLEOID-ASSOCIATED PROTEIN YBAB"/>
    <property type="match status" value="1"/>
</dbReference>
<dbReference type="Pfam" id="PF02575">
    <property type="entry name" value="YbaB_DNA_bd"/>
    <property type="match status" value="1"/>
</dbReference>
<dbReference type="PIRSF" id="PIRSF004555">
    <property type="entry name" value="UCP004555"/>
    <property type="match status" value="1"/>
</dbReference>
<dbReference type="SUPFAM" id="SSF82607">
    <property type="entry name" value="YbaB-like"/>
    <property type="match status" value="1"/>
</dbReference>
<gene>
    <name type="ordered locus">ckrop_0143</name>
</gene>
<protein>
    <recommendedName>
        <fullName evidence="1">Nucleoid-associated protein ckrop_0143</fullName>
    </recommendedName>
</protein>
<keyword id="KW-0963">Cytoplasm</keyword>
<keyword id="KW-0238">DNA-binding</keyword>
<keyword id="KW-1185">Reference proteome</keyword>